<reference key="1">
    <citation type="journal article" date="2007" name="PLoS Genet.">
        <title>The complete genome sequence of Yersinia pseudotuberculosis IP31758, the causative agent of Far East scarlet-like fever.</title>
        <authorList>
            <person name="Eppinger M."/>
            <person name="Rosovitz M.J."/>
            <person name="Fricke W.F."/>
            <person name="Rasko D.A."/>
            <person name="Kokorina G."/>
            <person name="Fayolle C."/>
            <person name="Lindler L.E."/>
            <person name="Carniel E."/>
            <person name="Ravel J."/>
        </authorList>
    </citation>
    <scope>NUCLEOTIDE SEQUENCE [LARGE SCALE GENOMIC DNA]</scope>
    <source>
        <strain>IP 31758</strain>
    </source>
</reference>
<organism>
    <name type="scientific">Yersinia pseudotuberculosis serotype O:1b (strain IP 31758)</name>
    <dbReference type="NCBI Taxonomy" id="349747"/>
    <lineage>
        <taxon>Bacteria</taxon>
        <taxon>Pseudomonadati</taxon>
        <taxon>Pseudomonadota</taxon>
        <taxon>Gammaproteobacteria</taxon>
        <taxon>Enterobacterales</taxon>
        <taxon>Yersiniaceae</taxon>
        <taxon>Yersinia</taxon>
    </lineage>
</organism>
<name>RNPH_YERP3</name>
<proteinExistence type="inferred from homology"/>
<sequence>MRPADRAAQQVRPLTLTRNYTKHAEGSVLVEFGDTKVLCTATVEEGVPRFLKGQGQGWITAEYGMLPRSTHSRNAREAAKGKQGGRTLEIQRLIARSLRAAVDLKKLGEFTITLDCDVLQADGGTRTASISGACVALADALNKLVASGKLKANPMKGLVAAVSVGIVKGEALCDLEYVEDSAAETDMNVVMMEDGRMIEVQGTAEGEPFSHEELLALLDLARGGIETIFQAQKAALES</sequence>
<feature type="chain" id="PRO_1000061139" description="Ribonuclease PH">
    <location>
        <begin position="1"/>
        <end position="238"/>
    </location>
</feature>
<feature type="binding site" evidence="1">
    <location>
        <position position="86"/>
    </location>
    <ligand>
        <name>phosphate</name>
        <dbReference type="ChEBI" id="CHEBI:43474"/>
        <note>substrate</note>
    </ligand>
</feature>
<feature type="binding site" evidence="1">
    <location>
        <begin position="124"/>
        <end position="126"/>
    </location>
    <ligand>
        <name>phosphate</name>
        <dbReference type="ChEBI" id="CHEBI:43474"/>
        <note>substrate</note>
    </ligand>
</feature>
<comment type="function">
    <text evidence="1">Phosphorolytic 3'-5' exoribonuclease that plays an important role in tRNA 3'-end maturation. Removes nucleotide residues following the 3'-CCA terminus of tRNAs; can also add nucleotides to the ends of RNA molecules by using nucleoside diphosphates as substrates, but this may not be physiologically important. Probably plays a role in initiation of 16S rRNA degradation (leading to ribosome degradation) during starvation.</text>
</comment>
<comment type="catalytic activity">
    <reaction evidence="1">
        <text>tRNA(n+1) + phosphate = tRNA(n) + a ribonucleoside 5'-diphosphate</text>
        <dbReference type="Rhea" id="RHEA:10628"/>
        <dbReference type="Rhea" id="RHEA-COMP:17343"/>
        <dbReference type="Rhea" id="RHEA-COMP:17344"/>
        <dbReference type="ChEBI" id="CHEBI:43474"/>
        <dbReference type="ChEBI" id="CHEBI:57930"/>
        <dbReference type="ChEBI" id="CHEBI:173114"/>
        <dbReference type="EC" id="2.7.7.56"/>
    </reaction>
</comment>
<comment type="subunit">
    <text evidence="1">Homohexameric ring arranged as a trimer of dimers.</text>
</comment>
<comment type="similarity">
    <text evidence="1">Belongs to the RNase PH family.</text>
</comment>
<protein>
    <recommendedName>
        <fullName evidence="1">Ribonuclease PH</fullName>
        <shortName evidence="1">RNase PH</shortName>
        <ecNumber evidence="1">2.7.7.56</ecNumber>
    </recommendedName>
    <alternativeName>
        <fullName evidence="1">tRNA nucleotidyltransferase</fullName>
    </alternativeName>
</protein>
<gene>
    <name evidence="1" type="primary">rph</name>
    <name type="ordered locus">YpsIP31758_0056</name>
</gene>
<evidence type="ECO:0000255" key="1">
    <source>
        <dbReference type="HAMAP-Rule" id="MF_00564"/>
    </source>
</evidence>
<dbReference type="EC" id="2.7.7.56" evidence="1"/>
<dbReference type="EMBL" id="CP000720">
    <property type="protein sequence ID" value="ABS45855.1"/>
    <property type="molecule type" value="Genomic_DNA"/>
</dbReference>
<dbReference type="RefSeq" id="WP_002208997.1">
    <property type="nucleotide sequence ID" value="NC_009708.1"/>
</dbReference>
<dbReference type="SMR" id="A7FCS9"/>
<dbReference type="GeneID" id="57974546"/>
<dbReference type="KEGG" id="ypi:YpsIP31758_0056"/>
<dbReference type="HOGENOM" id="CLU_050858_0_0_6"/>
<dbReference type="Proteomes" id="UP000002412">
    <property type="component" value="Chromosome"/>
</dbReference>
<dbReference type="GO" id="GO:0000175">
    <property type="term" value="F:3'-5'-RNA exonuclease activity"/>
    <property type="evidence" value="ECO:0007669"/>
    <property type="project" value="UniProtKB-UniRule"/>
</dbReference>
<dbReference type="GO" id="GO:0000049">
    <property type="term" value="F:tRNA binding"/>
    <property type="evidence" value="ECO:0007669"/>
    <property type="project" value="UniProtKB-UniRule"/>
</dbReference>
<dbReference type="GO" id="GO:0009022">
    <property type="term" value="F:tRNA nucleotidyltransferase activity"/>
    <property type="evidence" value="ECO:0007669"/>
    <property type="project" value="UniProtKB-UniRule"/>
</dbReference>
<dbReference type="GO" id="GO:0016075">
    <property type="term" value="P:rRNA catabolic process"/>
    <property type="evidence" value="ECO:0007669"/>
    <property type="project" value="UniProtKB-UniRule"/>
</dbReference>
<dbReference type="GO" id="GO:0006364">
    <property type="term" value="P:rRNA processing"/>
    <property type="evidence" value="ECO:0007669"/>
    <property type="project" value="UniProtKB-KW"/>
</dbReference>
<dbReference type="GO" id="GO:0008033">
    <property type="term" value="P:tRNA processing"/>
    <property type="evidence" value="ECO:0007669"/>
    <property type="project" value="UniProtKB-UniRule"/>
</dbReference>
<dbReference type="CDD" id="cd11362">
    <property type="entry name" value="RNase_PH_bact"/>
    <property type="match status" value="1"/>
</dbReference>
<dbReference type="FunFam" id="3.30.230.70:FF:000003">
    <property type="entry name" value="Ribonuclease PH"/>
    <property type="match status" value="1"/>
</dbReference>
<dbReference type="Gene3D" id="3.30.230.70">
    <property type="entry name" value="GHMP Kinase, N-terminal domain"/>
    <property type="match status" value="1"/>
</dbReference>
<dbReference type="HAMAP" id="MF_00564">
    <property type="entry name" value="RNase_PH"/>
    <property type="match status" value="1"/>
</dbReference>
<dbReference type="InterPro" id="IPR001247">
    <property type="entry name" value="ExoRNase_PH_dom1"/>
</dbReference>
<dbReference type="InterPro" id="IPR015847">
    <property type="entry name" value="ExoRNase_PH_dom2"/>
</dbReference>
<dbReference type="InterPro" id="IPR036345">
    <property type="entry name" value="ExoRNase_PH_dom2_sf"/>
</dbReference>
<dbReference type="InterPro" id="IPR027408">
    <property type="entry name" value="PNPase/RNase_PH_dom_sf"/>
</dbReference>
<dbReference type="InterPro" id="IPR020568">
    <property type="entry name" value="Ribosomal_Su5_D2-typ_SF"/>
</dbReference>
<dbReference type="InterPro" id="IPR050080">
    <property type="entry name" value="RNase_PH"/>
</dbReference>
<dbReference type="InterPro" id="IPR002381">
    <property type="entry name" value="RNase_PH_bac-type"/>
</dbReference>
<dbReference type="InterPro" id="IPR018336">
    <property type="entry name" value="RNase_PH_CS"/>
</dbReference>
<dbReference type="NCBIfam" id="TIGR01966">
    <property type="entry name" value="RNasePH"/>
    <property type="match status" value="1"/>
</dbReference>
<dbReference type="PANTHER" id="PTHR11953">
    <property type="entry name" value="EXOSOME COMPLEX COMPONENT"/>
    <property type="match status" value="1"/>
</dbReference>
<dbReference type="PANTHER" id="PTHR11953:SF0">
    <property type="entry name" value="EXOSOME COMPLEX COMPONENT RRP41"/>
    <property type="match status" value="1"/>
</dbReference>
<dbReference type="Pfam" id="PF01138">
    <property type="entry name" value="RNase_PH"/>
    <property type="match status" value="1"/>
</dbReference>
<dbReference type="Pfam" id="PF03725">
    <property type="entry name" value="RNase_PH_C"/>
    <property type="match status" value="1"/>
</dbReference>
<dbReference type="SUPFAM" id="SSF55666">
    <property type="entry name" value="Ribonuclease PH domain 2-like"/>
    <property type="match status" value="1"/>
</dbReference>
<dbReference type="SUPFAM" id="SSF54211">
    <property type="entry name" value="Ribosomal protein S5 domain 2-like"/>
    <property type="match status" value="1"/>
</dbReference>
<dbReference type="PROSITE" id="PS01277">
    <property type="entry name" value="RIBONUCLEASE_PH"/>
    <property type="match status" value="1"/>
</dbReference>
<accession>A7FCS9</accession>
<keyword id="KW-0548">Nucleotidyltransferase</keyword>
<keyword id="KW-0694">RNA-binding</keyword>
<keyword id="KW-0698">rRNA processing</keyword>
<keyword id="KW-0808">Transferase</keyword>
<keyword id="KW-0819">tRNA processing</keyword>
<keyword id="KW-0820">tRNA-binding</keyword>